<sequence length="563" mass="63244">MYLKLLEEAGRLMKQAVADAGYTVEDMSLVESQHADVSSSLPFRLAKELKKNPKEIAAAIVEKMGKSEYIDRVEATGAYINFYASQKYITDSLKEILSEKKFFELEPNGIKVILEHTSANPTGPLHVGRGRNPIIGDTLARLLRAGGYDLEVQYYVDDMGKQEATIVWGYDHLDRIKPGKPDTDKPDHEIVEVYRAATDLRKSDEAVEKEISEILNAYEHMDPATAVKFREMVERCLEGQKMTLARMNVFYDRFVWESDFVRDGSVNKAVKKLAESQYATTKDGALALDLSSFGMDKEFVLTRADGTSLYTTRDIAFHVWKLARCDRAINVLGEDQKLAMQRLNAALSILGEKKAPTIVFYSFVSLPEGRMSTRKGVVVNLDDLLDEAVERAYVEVDKRRKDIPEEKKRQIAEAVGIGAVRFDIVRVAPEKSITFKWETALDFEKQGAPFIQYAHARCCSILEKAKPGEYDASMLREPEEAALVKKIAMMPYVIKNASTELKPHVIAIYARELAEAFNQFYRVSPVLIAEPELKEARLALVEASRKALAASLGMLGIAAIEEM</sequence>
<evidence type="ECO:0000255" key="1">
    <source>
        <dbReference type="HAMAP-Rule" id="MF_00123"/>
    </source>
</evidence>
<comment type="catalytic activity">
    <reaction evidence="1">
        <text>tRNA(Arg) + L-arginine + ATP = L-arginyl-tRNA(Arg) + AMP + diphosphate</text>
        <dbReference type="Rhea" id="RHEA:20301"/>
        <dbReference type="Rhea" id="RHEA-COMP:9658"/>
        <dbReference type="Rhea" id="RHEA-COMP:9673"/>
        <dbReference type="ChEBI" id="CHEBI:30616"/>
        <dbReference type="ChEBI" id="CHEBI:32682"/>
        <dbReference type="ChEBI" id="CHEBI:33019"/>
        <dbReference type="ChEBI" id="CHEBI:78442"/>
        <dbReference type="ChEBI" id="CHEBI:78513"/>
        <dbReference type="ChEBI" id="CHEBI:456215"/>
        <dbReference type="EC" id="6.1.1.19"/>
    </reaction>
</comment>
<comment type="subcellular location">
    <subcellularLocation>
        <location evidence="1">Cytoplasm</location>
    </subcellularLocation>
</comment>
<comment type="similarity">
    <text evidence="1">Belongs to the class-I aminoacyl-tRNA synthetase family.</text>
</comment>
<keyword id="KW-0030">Aminoacyl-tRNA synthetase</keyword>
<keyword id="KW-0067">ATP-binding</keyword>
<keyword id="KW-0963">Cytoplasm</keyword>
<keyword id="KW-0436">Ligase</keyword>
<keyword id="KW-0547">Nucleotide-binding</keyword>
<keyword id="KW-0648">Protein biosynthesis</keyword>
<keyword id="KW-1185">Reference proteome</keyword>
<feature type="chain" id="PRO_1000018142" description="Arginine--tRNA ligase">
    <location>
        <begin position="1"/>
        <end position="563"/>
    </location>
</feature>
<feature type="short sequence motif" description="'HIGH' region">
    <location>
        <begin position="119"/>
        <end position="129"/>
    </location>
</feature>
<gene>
    <name evidence="1" type="primary">argS</name>
    <name type="ordered locus">UNCMA_22090</name>
    <name type="ORF">RCIX568</name>
</gene>
<dbReference type="EC" id="6.1.1.19" evidence="1"/>
<dbReference type="EMBL" id="AM114193">
    <property type="protein sequence ID" value="CAJ35976.1"/>
    <property type="molecule type" value="Genomic_DNA"/>
</dbReference>
<dbReference type="RefSeq" id="WP_012036529.1">
    <property type="nucleotide sequence ID" value="NC_009464.1"/>
</dbReference>
<dbReference type="SMR" id="Q0W6L7"/>
<dbReference type="STRING" id="351160.RCIX568"/>
<dbReference type="GeneID" id="5144438"/>
<dbReference type="KEGG" id="rci:RCIX568"/>
<dbReference type="PATRIC" id="fig|351160.9.peg.2259"/>
<dbReference type="eggNOG" id="arCOG00487">
    <property type="taxonomic scope" value="Archaea"/>
</dbReference>
<dbReference type="OrthoDB" id="372102at2157"/>
<dbReference type="Proteomes" id="UP000000663">
    <property type="component" value="Chromosome"/>
</dbReference>
<dbReference type="GO" id="GO:0005737">
    <property type="term" value="C:cytoplasm"/>
    <property type="evidence" value="ECO:0007669"/>
    <property type="project" value="UniProtKB-SubCell"/>
</dbReference>
<dbReference type="GO" id="GO:0004814">
    <property type="term" value="F:arginine-tRNA ligase activity"/>
    <property type="evidence" value="ECO:0007669"/>
    <property type="project" value="UniProtKB-UniRule"/>
</dbReference>
<dbReference type="GO" id="GO:0005524">
    <property type="term" value="F:ATP binding"/>
    <property type="evidence" value="ECO:0007669"/>
    <property type="project" value="UniProtKB-UniRule"/>
</dbReference>
<dbReference type="GO" id="GO:0006420">
    <property type="term" value="P:arginyl-tRNA aminoacylation"/>
    <property type="evidence" value="ECO:0007669"/>
    <property type="project" value="UniProtKB-UniRule"/>
</dbReference>
<dbReference type="CDD" id="cd07956">
    <property type="entry name" value="Anticodon_Ia_Arg"/>
    <property type="match status" value="1"/>
</dbReference>
<dbReference type="CDD" id="cd00671">
    <property type="entry name" value="ArgRS_core"/>
    <property type="match status" value="1"/>
</dbReference>
<dbReference type="FunFam" id="1.10.730.10:FF:000006">
    <property type="entry name" value="Arginyl-tRNA synthetase 2, mitochondrial"/>
    <property type="match status" value="1"/>
</dbReference>
<dbReference type="Gene3D" id="3.30.1360.70">
    <property type="entry name" value="Arginyl tRNA synthetase N-terminal domain"/>
    <property type="match status" value="1"/>
</dbReference>
<dbReference type="Gene3D" id="3.40.50.620">
    <property type="entry name" value="HUPs"/>
    <property type="match status" value="1"/>
</dbReference>
<dbReference type="Gene3D" id="1.10.730.10">
    <property type="entry name" value="Isoleucyl-tRNA Synthetase, Domain 1"/>
    <property type="match status" value="1"/>
</dbReference>
<dbReference type="HAMAP" id="MF_00123">
    <property type="entry name" value="Arg_tRNA_synth"/>
    <property type="match status" value="1"/>
</dbReference>
<dbReference type="InterPro" id="IPR001278">
    <property type="entry name" value="Arg-tRNA-ligase"/>
</dbReference>
<dbReference type="InterPro" id="IPR005148">
    <property type="entry name" value="Arg-tRNA-synth_N"/>
</dbReference>
<dbReference type="InterPro" id="IPR036695">
    <property type="entry name" value="Arg-tRNA-synth_N_sf"/>
</dbReference>
<dbReference type="InterPro" id="IPR035684">
    <property type="entry name" value="ArgRS_core"/>
</dbReference>
<dbReference type="InterPro" id="IPR008909">
    <property type="entry name" value="DALR_anticod-bd"/>
</dbReference>
<dbReference type="InterPro" id="IPR014729">
    <property type="entry name" value="Rossmann-like_a/b/a_fold"/>
</dbReference>
<dbReference type="InterPro" id="IPR009080">
    <property type="entry name" value="tRNAsynth_Ia_anticodon-bd"/>
</dbReference>
<dbReference type="NCBIfam" id="TIGR00456">
    <property type="entry name" value="argS"/>
    <property type="match status" value="1"/>
</dbReference>
<dbReference type="PANTHER" id="PTHR11956:SF5">
    <property type="entry name" value="ARGININE--TRNA LIGASE, CYTOPLASMIC"/>
    <property type="match status" value="1"/>
</dbReference>
<dbReference type="PANTHER" id="PTHR11956">
    <property type="entry name" value="ARGINYL-TRNA SYNTHETASE"/>
    <property type="match status" value="1"/>
</dbReference>
<dbReference type="Pfam" id="PF03485">
    <property type="entry name" value="Arg_tRNA_synt_N"/>
    <property type="match status" value="1"/>
</dbReference>
<dbReference type="Pfam" id="PF05746">
    <property type="entry name" value="DALR_1"/>
    <property type="match status" value="1"/>
</dbReference>
<dbReference type="Pfam" id="PF00750">
    <property type="entry name" value="tRNA-synt_1d"/>
    <property type="match status" value="1"/>
</dbReference>
<dbReference type="PRINTS" id="PR01038">
    <property type="entry name" value="TRNASYNTHARG"/>
</dbReference>
<dbReference type="SMART" id="SM01016">
    <property type="entry name" value="Arg_tRNA_synt_N"/>
    <property type="match status" value="1"/>
</dbReference>
<dbReference type="SMART" id="SM00836">
    <property type="entry name" value="DALR_1"/>
    <property type="match status" value="1"/>
</dbReference>
<dbReference type="SUPFAM" id="SSF47323">
    <property type="entry name" value="Anticodon-binding domain of a subclass of class I aminoacyl-tRNA synthetases"/>
    <property type="match status" value="1"/>
</dbReference>
<dbReference type="SUPFAM" id="SSF55190">
    <property type="entry name" value="Arginyl-tRNA synthetase (ArgRS), N-terminal 'additional' domain"/>
    <property type="match status" value="1"/>
</dbReference>
<dbReference type="SUPFAM" id="SSF52374">
    <property type="entry name" value="Nucleotidylyl transferase"/>
    <property type="match status" value="1"/>
</dbReference>
<organism>
    <name type="scientific">Methanocella arvoryzae (strain DSM 22066 / NBRC 105507 / MRE50)</name>
    <dbReference type="NCBI Taxonomy" id="351160"/>
    <lineage>
        <taxon>Archaea</taxon>
        <taxon>Methanobacteriati</taxon>
        <taxon>Methanobacteriota</taxon>
        <taxon>Stenosarchaea group</taxon>
        <taxon>Methanomicrobia</taxon>
        <taxon>Methanocellales</taxon>
        <taxon>Methanocellaceae</taxon>
        <taxon>Methanocella</taxon>
    </lineage>
</organism>
<protein>
    <recommendedName>
        <fullName evidence="1">Arginine--tRNA ligase</fullName>
        <ecNumber evidence="1">6.1.1.19</ecNumber>
    </recommendedName>
    <alternativeName>
        <fullName evidence="1">Arginyl-tRNA synthetase</fullName>
        <shortName evidence="1">ArgRS</shortName>
    </alternativeName>
</protein>
<proteinExistence type="inferred from homology"/>
<name>SYR_METAR</name>
<accession>Q0W6L7</accession>
<reference key="1">
    <citation type="journal article" date="2006" name="Science">
        <title>Genome of rice cluster I archaea -- the key methane producers in the rice rhizosphere.</title>
        <authorList>
            <person name="Erkel C."/>
            <person name="Kube M."/>
            <person name="Reinhardt R."/>
            <person name="Liesack W."/>
        </authorList>
    </citation>
    <scope>NUCLEOTIDE SEQUENCE [LARGE SCALE GENOMIC DNA]</scope>
    <source>
        <strain>DSM 22066 / NBRC 105507 / MRE50</strain>
    </source>
</reference>